<gene>
    <name type="ordered locus">MA_3524</name>
</gene>
<accession>Q8TK90</accession>
<feature type="chain" id="PRO_0000144855" description="Putative HTH-type transcriptional regulatory protein MA_3524">
    <location>
        <begin position="1"/>
        <end position="328"/>
    </location>
</feature>
<feature type="domain" description="HTH cro/C1-type" evidence="1">
    <location>
        <begin position="132"/>
        <end position="190"/>
    </location>
</feature>
<feature type="DNA-binding region" description="H-T-H motif" evidence="1">
    <location>
        <begin position="143"/>
        <end position="162"/>
    </location>
</feature>
<dbReference type="EMBL" id="AE010299">
    <property type="protein sequence ID" value="AAM06887.1"/>
    <property type="molecule type" value="Genomic_DNA"/>
</dbReference>
<dbReference type="RefSeq" id="WP_011023440.1">
    <property type="nucleotide sequence ID" value="NC_003552.1"/>
</dbReference>
<dbReference type="SMR" id="Q8TK90"/>
<dbReference type="FunCoup" id="Q8TK90">
    <property type="interactions" value="5"/>
</dbReference>
<dbReference type="STRING" id="188937.MA_3524"/>
<dbReference type="EnsemblBacteria" id="AAM06887">
    <property type="protein sequence ID" value="AAM06887"/>
    <property type="gene ID" value="MA_3524"/>
</dbReference>
<dbReference type="GeneID" id="1475418"/>
<dbReference type="KEGG" id="mac:MA_3524"/>
<dbReference type="HOGENOM" id="CLU_075726_0_0_2"/>
<dbReference type="InParanoid" id="Q8TK90"/>
<dbReference type="OrthoDB" id="31424at2157"/>
<dbReference type="PhylomeDB" id="Q8TK90"/>
<dbReference type="Proteomes" id="UP000002487">
    <property type="component" value="Chromosome"/>
</dbReference>
<dbReference type="GO" id="GO:0003677">
    <property type="term" value="F:DNA binding"/>
    <property type="evidence" value="ECO:0007669"/>
    <property type="project" value="UniProtKB-KW"/>
</dbReference>
<dbReference type="GO" id="GO:0003700">
    <property type="term" value="F:DNA-binding transcription factor activity"/>
    <property type="evidence" value="ECO:0007669"/>
    <property type="project" value="UniProtKB-UniRule"/>
</dbReference>
<dbReference type="CDD" id="cd00093">
    <property type="entry name" value="HTH_XRE"/>
    <property type="match status" value="1"/>
</dbReference>
<dbReference type="Gene3D" id="1.10.260.40">
    <property type="entry name" value="lambda repressor-like DNA-binding domains"/>
    <property type="match status" value="1"/>
</dbReference>
<dbReference type="HAMAP" id="MF_00584">
    <property type="entry name" value="HTH_type_cro_C1"/>
    <property type="match status" value="1"/>
</dbReference>
<dbReference type="InterPro" id="IPR020886">
    <property type="entry name" value="Arc_TR_HTH"/>
</dbReference>
<dbReference type="InterPro" id="IPR001387">
    <property type="entry name" value="Cro/C1-type_HTH"/>
</dbReference>
<dbReference type="InterPro" id="IPR010982">
    <property type="entry name" value="Lambda_DNA-bd_dom_sf"/>
</dbReference>
<dbReference type="NCBIfam" id="NF003162">
    <property type="entry name" value="PRK04140.1"/>
    <property type="match status" value="1"/>
</dbReference>
<dbReference type="Pfam" id="PF01381">
    <property type="entry name" value="HTH_3"/>
    <property type="match status" value="1"/>
</dbReference>
<dbReference type="SMART" id="SM00530">
    <property type="entry name" value="HTH_XRE"/>
    <property type="match status" value="1"/>
</dbReference>
<dbReference type="SUPFAM" id="SSF47413">
    <property type="entry name" value="lambda repressor-like DNA-binding domains"/>
    <property type="match status" value="1"/>
</dbReference>
<dbReference type="PROSITE" id="PS50943">
    <property type="entry name" value="HTH_CROC1"/>
    <property type="match status" value="1"/>
</dbReference>
<reference key="1">
    <citation type="journal article" date="2002" name="Genome Res.">
        <title>The genome of Methanosarcina acetivorans reveals extensive metabolic and physiological diversity.</title>
        <authorList>
            <person name="Galagan J.E."/>
            <person name="Nusbaum C."/>
            <person name="Roy A."/>
            <person name="Endrizzi M.G."/>
            <person name="Macdonald P."/>
            <person name="FitzHugh W."/>
            <person name="Calvo S."/>
            <person name="Engels R."/>
            <person name="Smirnov S."/>
            <person name="Atnoor D."/>
            <person name="Brown A."/>
            <person name="Allen N."/>
            <person name="Naylor J."/>
            <person name="Stange-Thomann N."/>
            <person name="DeArellano K."/>
            <person name="Johnson R."/>
            <person name="Linton L."/>
            <person name="McEwan P."/>
            <person name="McKernan K."/>
            <person name="Talamas J."/>
            <person name="Tirrell A."/>
            <person name="Ye W."/>
            <person name="Zimmer A."/>
            <person name="Barber R.D."/>
            <person name="Cann I."/>
            <person name="Graham D.E."/>
            <person name="Grahame D.A."/>
            <person name="Guss A.M."/>
            <person name="Hedderich R."/>
            <person name="Ingram-Smith C."/>
            <person name="Kuettner H.C."/>
            <person name="Krzycki J.A."/>
            <person name="Leigh J.A."/>
            <person name="Li W."/>
            <person name="Liu J."/>
            <person name="Mukhopadhyay B."/>
            <person name="Reeve J.N."/>
            <person name="Smith K."/>
            <person name="Springer T.A."/>
            <person name="Umayam L.A."/>
            <person name="White O."/>
            <person name="White R.H."/>
            <person name="de Macario E.C."/>
            <person name="Ferry J.G."/>
            <person name="Jarrell K.F."/>
            <person name="Jing H."/>
            <person name="Macario A.J.L."/>
            <person name="Paulsen I.T."/>
            <person name="Pritchett M."/>
            <person name="Sowers K.R."/>
            <person name="Swanson R.V."/>
            <person name="Zinder S.H."/>
            <person name="Lander E."/>
            <person name="Metcalf W.W."/>
            <person name="Birren B."/>
        </authorList>
    </citation>
    <scope>NUCLEOTIDE SEQUENCE [LARGE SCALE GENOMIC DNA]</scope>
    <source>
        <strain>ATCC 35395 / DSM 2834 / JCM 12185 / C2A</strain>
    </source>
</reference>
<keyword id="KW-0238">DNA-binding</keyword>
<keyword id="KW-1185">Reference proteome</keyword>
<keyword id="KW-0804">Transcription</keyword>
<keyword id="KW-0805">Transcription regulation</keyword>
<sequence>MTKEVLIHQIIDVLSRAGFALSDRCNIRPRSFDVAARKDETLLLCKVLFNIDGLNEETAREMKYLAEYLGGSAIVVGAKTRDQMLEDSVVYMRYDILALNVQTLYDYFVENIKPLVSAAPGGLYISIEGDLLKKARTDQSMSLGTLASMVGVSRRTISKYEEEGMDASIDVVLQLEDIFGVELARPIDILKSCGSRKPRKKAEPEKEDPQVKHNALLPEDLILNTISMLGYDVLPTAQAPFKAISRDKSSVILTGVSEFNTTVVKRAHLMSSISCITETQSVFIINGRSKLKSVENTALIEKKELDKISDSQELLEFIEERKDTNSGA</sequence>
<name>Y3524_METAC</name>
<proteinExistence type="inferred from homology"/>
<protein>
    <recommendedName>
        <fullName evidence="1">Putative HTH-type transcriptional regulatory protein MA_3524</fullName>
    </recommendedName>
</protein>
<organism>
    <name type="scientific">Methanosarcina acetivorans (strain ATCC 35395 / DSM 2834 / JCM 12185 / C2A)</name>
    <dbReference type="NCBI Taxonomy" id="188937"/>
    <lineage>
        <taxon>Archaea</taxon>
        <taxon>Methanobacteriati</taxon>
        <taxon>Methanobacteriota</taxon>
        <taxon>Stenosarchaea group</taxon>
        <taxon>Methanomicrobia</taxon>
        <taxon>Methanosarcinales</taxon>
        <taxon>Methanosarcinaceae</taxon>
        <taxon>Methanosarcina</taxon>
    </lineage>
</organism>
<evidence type="ECO:0000255" key="1">
    <source>
        <dbReference type="HAMAP-Rule" id="MF_00584"/>
    </source>
</evidence>